<sequence>METATLVAISISGLLVSFTGYALYTAFGQPSQQLRDPFEEHGD</sequence>
<comment type="function">
    <text evidence="1">May play a role in photosystem I and II biogenesis.</text>
</comment>
<comment type="subcellular location">
    <subcellularLocation>
        <location evidence="1">Plastid</location>
        <location evidence="1">Chloroplast thylakoid membrane</location>
        <topology evidence="1">Single-pass membrane protein</topology>
    </subcellularLocation>
</comment>
<comment type="similarity">
    <text evidence="1">Belongs to the PsbN family.</text>
</comment>
<comment type="caution">
    <text evidence="1">Originally thought to be a component of PSII; based on experiments in Synechocystis, N.tabacum and barley, and its absence from PSII in T.elongatus and T.vulcanus, this is probably not true.</text>
</comment>
<feature type="chain" id="PRO_0000362207" description="Protein PsbN">
    <location>
        <begin position="1"/>
        <end position="43"/>
    </location>
</feature>
<feature type="transmembrane region" description="Helical" evidence="1">
    <location>
        <begin position="5"/>
        <end position="27"/>
    </location>
</feature>
<evidence type="ECO:0000255" key="1">
    <source>
        <dbReference type="HAMAP-Rule" id="MF_00293"/>
    </source>
</evidence>
<accession>B0Z4Y8</accession>
<dbReference type="EMBL" id="EU262889">
    <property type="protein sequence ID" value="ABW98900.1"/>
    <property type="molecule type" value="Genomic_DNA"/>
</dbReference>
<dbReference type="RefSeq" id="YP_001687395.1">
    <property type="nucleotide sequence ID" value="NC_010361.1"/>
</dbReference>
<dbReference type="SMR" id="B0Z4Y8"/>
<dbReference type="GeneID" id="5952027"/>
<dbReference type="GO" id="GO:0009535">
    <property type="term" value="C:chloroplast thylakoid membrane"/>
    <property type="evidence" value="ECO:0007669"/>
    <property type="project" value="UniProtKB-SubCell"/>
</dbReference>
<dbReference type="GO" id="GO:0015979">
    <property type="term" value="P:photosynthesis"/>
    <property type="evidence" value="ECO:0007669"/>
    <property type="project" value="InterPro"/>
</dbReference>
<dbReference type="HAMAP" id="MF_00293">
    <property type="entry name" value="PSII_PsbN"/>
    <property type="match status" value="1"/>
</dbReference>
<dbReference type="InterPro" id="IPR003398">
    <property type="entry name" value="PSII_PsbN"/>
</dbReference>
<dbReference type="PANTHER" id="PTHR35326">
    <property type="entry name" value="PROTEIN PSBN"/>
    <property type="match status" value="1"/>
</dbReference>
<dbReference type="PANTHER" id="PTHR35326:SF3">
    <property type="entry name" value="PROTEIN PSBN"/>
    <property type="match status" value="1"/>
</dbReference>
<dbReference type="Pfam" id="PF02468">
    <property type="entry name" value="PsbN"/>
    <property type="match status" value="1"/>
</dbReference>
<protein>
    <recommendedName>
        <fullName evidence="1">Protein PsbN</fullName>
    </recommendedName>
</protein>
<organism>
    <name type="scientific">Oenothera biennis</name>
    <name type="common">German evening primrose</name>
    <name type="synonym">Onagra biennis</name>
    <dbReference type="NCBI Taxonomy" id="3942"/>
    <lineage>
        <taxon>Eukaryota</taxon>
        <taxon>Viridiplantae</taxon>
        <taxon>Streptophyta</taxon>
        <taxon>Embryophyta</taxon>
        <taxon>Tracheophyta</taxon>
        <taxon>Spermatophyta</taxon>
        <taxon>Magnoliopsida</taxon>
        <taxon>eudicotyledons</taxon>
        <taxon>Gunneridae</taxon>
        <taxon>Pentapetalae</taxon>
        <taxon>rosids</taxon>
        <taxon>malvids</taxon>
        <taxon>Myrtales</taxon>
        <taxon>Onagraceae</taxon>
        <taxon>Onagroideae</taxon>
        <taxon>Onagreae</taxon>
        <taxon>Oenothera</taxon>
    </lineage>
</organism>
<keyword id="KW-0150">Chloroplast</keyword>
<keyword id="KW-0472">Membrane</keyword>
<keyword id="KW-0934">Plastid</keyword>
<keyword id="KW-0793">Thylakoid</keyword>
<keyword id="KW-0812">Transmembrane</keyword>
<keyword id="KW-1133">Transmembrane helix</keyword>
<geneLocation type="chloroplast"/>
<proteinExistence type="inferred from homology"/>
<reference key="1">
    <citation type="journal article" date="2008" name="Nucleic Acids Res.">
        <title>The complete nucleotide sequences of the five genetically distinct plastid genomes of Oenothera, subsection Oenothera: I. Sequence evaluation and plastome evolution.</title>
        <authorList>
            <person name="Greiner S."/>
            <person name="Wang X."/>
            <person name="Rauwolf U."/>
            <person name="Silber M.V."/>
            <person name="Mayer K."/>
            <person name="Meurer J."/>
            <person name="Haberer G."/>
            <person name="Herrmann R.G."/>
        </authorList>
    </citation>
    <scope>NUCLEOTIDE SEQUENCE [LARGE SCALE GENOMIC DNA]</scope>
    <source>
        <strain>cv. Suaveolens Grado</strain>
    </source>
</reference>
<gene>
    <name evidence="1" type="primary">psbN</name>
</gene>
<name>PSBN_OENBI</name>